<proteinExistence type="inferred from homology"/>
<organismHost>
    <name type="scientific">Homo sapiens</name>
    <name type="common">Human</name>
    <dbReference type="NCBI Taxonomy" id="9606"/>
</organismHost>
<comment type="function">
    <text evidence="1">Plays a role in the inhibition of host innate immunity by inducing the degradation of key host factors required to activate interferon production such as IRF3, IRF5 or IRF7. Associates with components of cullin RING ligases (CRLs) including CUL1 or CUL3, which are essential multisubunit ubiquitination complexes, to modulate their activities. Recognizes the host NF-kappa-B regulator BTRC through the presence of a DSGXS motif in the C-terminal substrate recognition domain.</text>
</comment>
<comment type="subunit">
    <text evidence="1">Interacts (via C-terminus) with host IRF3; this interaction leads to IRF3 degradation. Interacts with host IRF7; this interaction leads to IRF7 degradation. Interacts with host CUL1 and CUL3. Interacts with host BTRC.</text>
</comment>
<comment type="subcellular location">
    <subcellularLocation>
        <location evidence="1">Host cytoplasm</location>
        <location evidence="1">Host cytoskeleton</location>
    </subcellularLocation>
</comment>
<comment type="domain">
    <text evidence="1">The integrity of the zinc-binding domain in NSP1 is important for degradation of host IRF3.</text>
</comment>
<comment type="domain">
    <text evidence="1">The pLxIS motif targets host IRF3 for degradation; however phosphorylation of NSP1 pLxIS motif is not required for its activity.</text>
</comment>
<comment type="PTM">
    <text evidence="1">The C-terminal region is phosphorylated by host CKII/CSNK2A1. Phosphorylation of the DSGXS motif is essential for host NF-kappa-B inhibition.</text>
</comment>
<comment type="similarity">
    <text evidence="1">Belongs to the rotavirus NSP1 family.</text>
</comment>
<evidence type="ECO:0000255" key="1">
    <source>
        <dbReference type="HAMAP-Rule" id="MF_04088"/>
    </source>
</evidence>
<accession>B3SRX6</accession>
<sequence>MATFKDACYYYKRINKLNHTVLKLGVNDTWRPSPPTKYKGWCLDCCQHTDLTYCRGCTMYHVCQWCSQYGRCFLDNEPHLLRMRTFKNEVTKDDLMNLIDMYDTLFPMNQKIVDKFINNTRQHKCRNECMTQWYNHLLMPITLQSLSIELDGDIYYVFGYYDDMNNVNQTPFSFINLIDICDKLLLDDVNFTRMSFLPITLQQEYALRYFSKSRFISEQRKCVSDSHFSINVLENLHNPSFKIQITRNCSELSSDWNGACKLVKDTSAYFNILKTSHVEFYSVSTRCRMFTQRKLQIASKLMKPNYMTSNHRASATEVHNCKWCSTNSSYIVWNDFRVKKIYDNILNFLRALVKSNVNVGHCSSQEKIYECVENILDICDNEKWKTSVTEIFNCLEPVELNAVNYVLFNHEVNWDVINILVQSIGKVPQILTLNDVVTIMQSIIYEWFDIRYMRNTPMTTFTVDKLRRLCIEPKTVDYDSGISDVE</sequence>
<reference key="1">
    <citation type="journal article" date="2008" name="J. Virol.">
        <title>Group A human rotavirus genomics: evidence that gene constellations are influenced by viral protein interactions.</title>
        <authorList>
            <person name="Heiman E.M."/>
            <person name="McDonald S.M."/>
            <person name="Barro M."/>
            <person name="Taraporewala Z.F."/>
            <person name="Bar-Magen T."/>
            <person name="Patton J.T."/>
        </authorList>
    </citation>
    <scope>NUCLEOTIDE SEQUENCE [GENOMIC RNA]</scope>
</reference>
<name>NSP1_ROTWI</name>
<feature type="chain" id="PRO_0000369076" description="Non-structural protein 1">
    <location>
        <begin position="1"/>
        <end position="486"/>
    </location>
</feature>
<feature type="region of interest" description="RNA-binding" evidence="1">
    <location>
        <begin position="1"/>
        <end position="81"/>
    </location>
</feature>
<feature type="region of interest" description="Zinc-binding domain" evidence="1">
    <location>
        <begin position="42"/>
        <end position="79"/>
    </location>
</feature>
<feature type="region of interest" description="Important for cytoskeleton localization" evidence="1">
    <location>
        <begin position="82"/>
        <end position="176"/>
    </location>
</feature>
<feature type="region of interest" description="Interaction with host IRF3" evidence="1">
    <location>
        <begin position="317"/>
        <end position="486"/>
    </location>
</feature>
<feature type="short sequence motif" description="IKBKB-like degron (ILD) motif" evidence="1">
    <location>
        <begin position="479"/>
        <end position="483"/>
    </location>
</feature>
<feature type="short sequence motif" description="pLxIS motif" evidence="1">
    <location>
        <begin position="480"/>
        <end position="483"/>
    </location>
</feature>
<keyword id="KW-1035">Host cytoplasm</keyword>
<keyword id="KW-1037">Host cytoskeleton</keyword>
<keyword id="KW-0945">Host-virus interaction</keyword>
<keyword id="KW-1090">Inhibition of host innate immune response by virus</keyword>
<keyword id="KW-1092">Inhibition of host IRF3 by virus</keyword>
<keyword id="KW-1093">Inhibition of host IRF7 by virus</keyword>
<keyword id="KW-1100">Inhibition of host NF-kappa-B by virus</keyword>
<keyword id="KW-1113">Inhibition of host RLR pathway by virus</keyword>
<keyword id="KW-0922">Interferon antiviral system evasion</keyword>
<keyword id="KW-0479">Metal-binding</keyword>
<keyword id="KW-0597">Phosphoprotein</keyword>
<keyword id="KW-0694">RNA-binding</keyword>
<keyword id="KW-0899">Viral immunoevasion</keyword>
<protein>
    <recommendedName>
        <fullName evidence="1">Non-structural protein 1</fullName>
        <shortName evidence="1">NSP1</shortName>
    </recommendedName>
    <alternativeName>
        <fullName evidence="1">NCVP2</fullName>
    </alternativeName>
    <alternativeName>
        <fullName evidence="1">Non-structural RNA-binding protein 53</fullName>
        <shortName evidence="1">NS53</shortName>
    </alternativeName>
</protein>
<dbReference type="EMBL" id="EF672620">
    <property type="protein sequence ID" value="ABV53301.1"/>
    <property type="molecule type" value="Genomic_RNA"/>
</dbReference>
<dbReference type="Proteomes" id="UP000006580">
    <property type="component" value="Genome"/>
</dbReference>
<dbReference type="GO" id="GO:0030430">
    <property type="term" value="C:host cell cytoplasm"/>
    <property type="evidence" value="ECO:0007669"/>
    <property type="project" value="UniProtKB-UniRule"/>
</dbReference>
<dbReference type="GO" id="GO:0044163">
    <property type="term" value="C:host cytoskeleton"/>
    <property type="evidence" value="ECO:0007669"/>
    <property type="project" value="UniProtKB-SubCell"/>
</dbReference>
<dbReference type="GO" id="GO:0046872">
    <property type="term" value="F:metal ion binding"/>
    <property type="evidence" value="ECO:0007669"/>
    <property type="project" value="UniProtKB-UniRule"/>
</dbReference>
<dbReference type="GO" id="GO:0003723">
    <property type="term" value="F:RNA binding"/>
    <property type="evidence" value="ECO:0007669"/>
    <property type="project" value="UniProtKB-UniRule"/>
</dbReference>
<dbReference type="GO" id="GO:0039548">
    <property type="term" value="P:symbiont-mediated suppression of host cytoplasmic pattern recognition receptor signaling pathway via inhibition of IRF3 activity"/>
    <property type="evidence" value="ECO:0007669"/>
    <property type="project" value="UniProtKB-UniRule"/>
</dbReference>
<dbReference type="GO" id="GO:0039557">
    <property type="term" value="P:symbiont-mediated suppression of host cytoplasmic pattern recognition receptor signaling pathway via inhibition of IRF7 activity"/>
    <property type="evidence" value="ECO:0007669"/>
    <property type="project" value="UniProtKB-UniRule"/>
</dbReference>
<dbReference type="GO" id="GO:0085034">
    <property type="term" value="P:symbiont-mediated suppression of host NF-kappaB cascade"/>
    <property type="evidence" value="ECO:0007669"/>
    <property type="project" value="UniProtKB-UniRule"/>
</dbReference>
<dbReference type="HAMAP" id="MF_04088">
    <property type="entry name" value="ROTA_NSP1"/>
    <property type="match status" value="1"/>
</dbReference>
<dbReference type="InterPro" id="IPR002148">
    <property type="entry name" value="Rotavirus_NSP1"/>
</dbReference>
<dbReference type="Pfam" id="PF00981">
    <property type="entry name" value="Rota_NS53"/>
    <property type="match status" value="1"/>
</dbReference>
<organism>
    <name type="scientific">Rotavirus A (isolate RVA/Human/United States/WI61/1983/G9P1A[8])</name>
    <name type="common">RV-A</name>
    <dbReference type="NCBI Taxonomy" id="578830"/>
    <lineage>
        <taxon>Viruses</taxon>
        <taxon>Riboviria</taxon>
        <taxon>Orthornavirae</taxon>
        <taxon>Duplornaviricota</taxon>
        <taxon>Resentoviricetes</taxon>
        <taxon>Reovirales</taxon>
        <taxon>Sedoreoviridae</taxon>
        <taxon>Rotavirus</taxon>
        <taxon>Rotavirus A</taxon>
    </lineage>
</organism>